<sequence>MTSLMCRDDALVQVLNKAGYNPILLPRTGLEPPEIYLYEQGVLRRWGRLATAVPAGSLPDTLQEGEQADISHSETSRKSLQAAGNFLNDALRCIGVNSAPKLDLSFARGAVVTFSFSGVTWRGLDPADIGAALNQGFDPAGLSEEKLRLGMVHVAYDYAYADAIDMTLATDGSAKVDVQALNINGFIDLGGKAECEVKSSTTISFKGKGKPAAFACKLGQVKRAKNRWTFNAREVVGQGFAPEEGAAEPYLLRRGQVLIVEDMQAT</sequence>
<evidence type="ECO:0000250" key="1">
    <source>
        <dbReference type="UniProtKB" id="A0A0S2DNG5"/>
    </source>
</evidence>
<evidence type="ECO:0000250" key="2">
    <source>
        <dbReference type="UniProtKB" id="A0A2T4VDM4"/>
    </source>
</evidence>
<evidence type="ECO:0000250" key="3">
    <source>
        <dbReference type="UniProtKB" id="P0DV46"/>
    </source>
</evidence>
<evidence type="ECO:0000250" key="4">
    <source>
        <dbReference type="UniProtKB" id="P0DV48"/>
    </source>
</evidence>
<evidence type="ECO:0000269" key="5">
    <source>
    </source>
</evidence>
<evidence type="ECO:0000303" key="6">
    <source>
    </source>
</evidence>
<evidence type="ECO:0000305" key="7"/>
<evidence type="ECO:0000305" key="8">
    <source>
    </source>
</evidence>
<evidence type="ECO:0000312" key="9">
    <source>
        <dbReference type="EMBL" id="GAP38944.1"/>
    </source>
</evidence>
<protein>
    <recommendedName>
        <fullName evidence="7">Gasdermin bGSDM</fullName>
        <shortName evidence="6">bGSDM</shortName>
    </recommendedName>
    <alternativeName>
        <fullName evidence="6">Bacterial gasdermin</fullName>
    </alternativeName>
    <component>
        <recommendedName>
            <fullName evidence="7">Gasdermin bGSDM, N-terminus</fullName>
        </recommendedName>
    </component>
</protein>
<gene>
    <name evidence="6" type="ORF">Ga0126466_110525</name>
    <name evidence="9" type="ORF">ISF6_0257</name>
</gene>
<keyword id="KW-0051">Antiviral defense</keyword>
<keyword id="KW-0997">Cell inner membrane</keyword>
<keyword id="KW-1003">Cell membrane</keyword>
<keyword id="KW-0963">Cytoplasm</keyword>
<keyword id="KW-0449">Lipoprotein</keyword>
<keyword id="KW-0472">Membrane</keyword>
<keyword id="KW-0564">Palmitate</keyword>
<keyword id="KW-1185">Reference proteome</keyword>
<keyword id="KW-0812">Transmembrane</keyword>
<keyword id="KW-1134">Transmembrane beta strand</keyword>
<organism>
    <name type="scientific">Piscinibacter sakaiensis</name>
    <name type="common">Ideonella sakaiensis</name>
    <dbReference type="NCBI Taxonomy" id="1547922"/>
    <lineage>
        <taxon>Bacteria</taxon>
        <taxon>Pseudomonadati</taxon>
        <taxon>Pseudomonadota</taxon>
        <taxon>Betaproteobacteria</taxon>
        <taxon>Burkholderiales</taxon>
        <taxon>Sphaerotilaceae</taxon>
        <taxon>Piscinibacter</taxon>
    </lineage>
</organism>
<proteinExistence type="evidence at protein level"/>
<comment type="function">
    <molecule>Gasdermin bGSDM</molecule>
    <text evidence="1 4">Precursor of a pore-forming protein involved in defense against bacteriophages (By similarity). Cleavage of this precursor by its dedicated, neighboring protease (probably ISF6_0256) releases the active moiety (gasdermin bGSDM, N-terminus) which inserts into membranes, forming pores and triggering cell death (By similarity).</text>
</comment>
<comment type="function">
    <molecule>Gasdermin bGSDM, N-terminus</molecule>
    <text evidence="4 5">Pore-forming protein that causes membrane permeabilization via a pyroptosis-like activity (By similarity). Makes ring-like pores with an interior pore diameter of 300-400 Angstroms, when integrated in liposomes (PubMed:38509367).</text>
</comment>
<comment type="activity regulation">
    <molecule>Gasdermin bGSDM</molecule>
    <text evidence="4">The full-length protein before cleavage is inactive: intramolecular interactions between the N-terminal domain and the C-terminal region as well as the lipid modification, mediate autoinhibition. The pyroptosis-like-inducing activity is carried by the released N-terminal domain (Gasdermin bGSDM, N-terminus).</text>
</comment>
<comment type="subunit">
    <molecule>Gasdermin bGSDM</molecule>
    <text evidence="4">Monomer.</text>
</comment>
<comment type="subunit">
    <molecule>Gasdermin bGSDM, N-terminus</molecule>
    <text evidence="5">Forms large, homooligomeric ring-shaped pores when inserted in membranes.</text>
</comment>
<comment type="subcellular location">
    <molecule>Gasdermin bGSDM</molecule>
    <subcellularLocation>
        <location evidence="4">Cytoplasm</location>
    </subcellularLocation>
</comment>
<comment type="subcellular location">
    <subcellularLocation>
        <location evidence="8">Cell inner membrane</location>
        <topology evidence="4">Multi-pass membrane protein</topology>
    </subcellularLocation>
</comment>
<comment type="domain">
    <text evidence="4">The N-terminus has marked structural similarity to the mammalian gasdermin N-terminal domain. The C-terminal region wraps around the twisted beta sheet core, probably stabilizing the inactive state.</text>
</comment>
<comment type="domain">
    <text evidence="2">The beta-stranded transmembrane 'fingers' of the active protein form by local refolding of several alpha helices found only in the inactive state. Reorientation of the N-terminus probably flips the palmitoyl moiety for insertion into the membrane.</text>
</comment>
<comment type="PTM">
    <molecule>Gasdermin bGSDM</molecule>
    <text evidence="4">Cleavage by the adjacently encoded protease (probably ISF6_0256) predicted to occur between Glu-244 and Gly-245 relieves autoinhibition, releasing the N-terminus which initiates loss of cell integrity (By similarity).</text>
</comment>
<comment type="PTM">
    <text evidence="2 3">Palmitoylation helps stabilize the inactive state; may self palmitoylate. Palmitoylation plays a significant role in pore formation.</text>
</comment>
<comment type="similarity">
    <text evidence="5">Belongs to the bacterial gasdermin family.</text>
</comment>
<comment type="sequence caution" evidence="7">
    <conflict type="erroneous initiation">
        <sequence resource="EMBL-CDS" id="GAP38944"/>
    </conflict>
    <text>Truncated N-terminus.</text>
</comment>
<feature type="chain" id="PRO_0000461107" description="Gasdermin bGSDM">
    <location>
        <begin position="1"/>
        <end position="266"/>
    </location>
</feature>
<feature type="chain" id="PRO_0000461108" description="Gasdermin bGSDM, N-terminus" evidence="8">
    <location>
        <begin position="1"/>
        <end position="244"/>
    </location>
</feature>
<feature type="transmembrane region" description="Beta stranded" evidence="2">
    <location>
        <begin position="70"/>
        <end position="86"/>
    </location>
</feature>
<feature type="transmembrane region" description="Beta stranded" evidence="2">
    <location>
        <begin position="99"/>
        <end position="117"/>
    </location>
</feature>
<feature type="transmembrane region" description="Beta stranded" evidence="2">
    <location>
        <begin position="163"/>
        <end position="180"/>
    </location>
</feature>
<feature type="transmembrane region" description="Beta stranded" evidence="2">
    <location>
        <begin position="189"/>
        <end position="205"/>
    </location>
</feature>
<feature type="region of interest" description="C-terminal region" evidence="8">
    <location>
        <begin position="245"/>
        <end position="266"/>
    </location>
</feature>
<feature type="site" description="Cleavage; by neighboring protease" evidence="8">
    <location>
        <begin position="244"/>
        <end position="245"/>
    </location>
</feature>
<feature type="lipid moiety-binding region" description="S-palmitoyl cysteine" evidence="2">
    <location>
        <position position="6"/>
    </location>
</feature>
<dbReference type="EMBL" id="BBYR01000105">
    <property type="protein sequence ID" value="GAP38944.1"/>
    <property type="status" value="ALT_INIT"/>
    <property type="molecule type" value="Genomic_DNA"/>
</dbReference>
<dbReference type="RefSeq" id="WP_157549374.1">
    <property type="nucleotide sequence ID" value="NZ_BBYR01000105.1"/>
</dbReference>
<dbReference type="SMR" id="A0A0K8P8V5"/>
<dbReference type="STRING" id="1547922.ISF6_0257"/>
<dbReference type="Proteomes" id="UP000037660">
    <property type="component" value="Unassembled WGS sequence"/>
</dbReference>
<dbReference type="GO" id="GO:0005737">
    <property type="term" value="C:cytoplasm"/>
    <property type="evidence" value="ECO:0007669"/>
    <property type="project" value="UniProtKB-SubCell"/>
</dbReference>
<dbReference type="GO" id="GO:0005886">
    <property type="term" value="C:plasma membrane"/>
    <property type="evidence" value="ECO:0007669"/>
    <property type="project" value="UniProtKB-SubCell"/>
</dbReference>
<dbReference type="GO" id="GO:0051607">
    <property type="term" value="P:defense response to virus"/>
    <property type="evidence" value="ECO:0007669"/>
    <property type="project" value="UniProtKB-KW"/>
</dbReference>
<accession>A0A0K8P8V5</accession>
<reference evidence="9" key="1">
    <citation type="journal article" date="2016" name="Science">
        <title>A bacterium that degrades and assimilates poly(ethylene terephthalate).</title>
        <authorList>
            <person name="Yoshida S."/>
            <person name="Hiraga K."/>
            <person name="Takehana T."/>
            <person name="Taniguchi I."/>
            <person name="Yamaji H."/>
            <person name="Maeda Y."/>
            <person name="Toyohara K."/>
            <person name="Miyamoto K."/>
            <person name="Kimura Y."/>
            <person name="Oda K."/>
        </authorList>
    </citation>
    <scope>NUCLEOTIDE SEQUENCE [LARGE SCALE GENOMIC DNA]</scope>
    <source>
        <strain>NBRC 110686 / NCTC 14201 / TISTR 2288 / 201-F6</strain>
    </source>
</reference>
<reference key="2">
    <citation type="journal article" date="2024" name="Nature">
        <title>Structure and assembly of a bacterial gasdermin pore.</title>
        <authorList>
            <person name="Johnson A.G."/>
            <person name="Mayer M.L."/>
            <person name="Schaefer S.L."/>
            <person name="McNamara-Bordewick N.K."/>
            <person name="Hummer G."/>
            <person name="Kranzusch P.J."/>
        </authorList>
    </citation>
    <scope>FUNCTION</scope>
    <scope>SUBUNIT</scope>
    <scope>SUBCELLULAR LOCATION</scope>
    <source>
        <strain>NBRC 110686 / NCTC 14201 / TISTR 2288 / 201-F6</strain>
    </source>
</reference>
<name>GSDM_PISS1</name>